<feature type="chain" id="PRO_1000016449" description="Histidine--tRNA ligase">
    <location>
        <begin position="1"/>
        <end position="425"/>
    </location>
</feature>
<reference key="1">
    <citation type="submission" date="2006-09" db="EMBL/GenBank/DDBJ databases">
        <title>Complete sequence of chromosome 1 of Shewanella sp. ANA-3.</title>
        <authorList>
            <person name="Copeland A."/>
            <person name="Lucas S."/>
            <person name="Lapidus A."/>
            <person name="Barry K."/>
            <person name="Detter J.C."/>
            <person name="Glavina del Rio T."/>
            <person name="Hammon N."/>
            <person name="Israni S."/>
            <person name="Dalin E."/>
            <person name="Tice H."/>
            <person name="Pitluck S."/>
            <person name="Chertkov O."/>
            <person name="Brettin T."/>
            <person name="Bruce D."/>
            <person name="Han C."/>
            <person name="Tapia R."/>
            <person name="Gilna P."/>
            <person name="Schmutz J."/>
            <person name="Larimer F."/>
            <person name="Land M."/>
            <person name="Hauser L."/>
            <person name="Kyrpides N."/>
            <person name="Kim E."/>
            <person name="Newman D."/>
            <person name="Salticov C."/>
            <person name="Konstantinidis K."/>
            <person name="Klappenback J."/>
            <person name="Tiedje J."/>
            <person name="Richardson P."/>
        </authorList>
    </citation>
    <scope>NUCLEOTIDE SEQUENCE [LARGE SCALE GENOMIC DNA]</scope>
    <source>
        <strain>ANA-3</strain>
    </source>
</reference>
<gene>
    <name evidence="1" type="primary">hisS</name>
    <name type="ordered locus">Shewana3_1230</name>
</gene>
<proteinExistence type="inferred from homology"/>
<evidence type="ECO:0000255" key="1">
    <source>
        <dbReference type="HAMAP-Rule" id="MF_00127"/>
    </source>
</evidence>
<name>SYH_SHESA</name>
<accession>A0KUJ6</accession>
<comment type="catalytic activity">
    <reaction evidence="1">
        <text>tRNA(His) + L-histidine + ATP = L-histidyl-tRNA(His) + AMP + diphosphate + H(+)</text>
        <dbReference type="Rhea" id="RHEA:17313"/>
        <dbReference type="Rhea" id="RHEA-COMP:9665"/>
        <dbReference type="Rhea" id="RHEA-COMP:9689"/>
        <dbReference type="ChEBI" id="CHEBI:15378"/>
        <dbReference type="ChEBI" id="CHEBI:30616"/>
        <dbReference type="ChEBI" id="CHEBI:33019"/>
        <dbReference type="ChEBI" id="CHEBI:57595"/>
        <dbReference type="ChEBI" id="CHEBI:78442"/>
        <dbReference type="ChEBI" id="CHEBI:78527"/>
        <dbReference type="ChEBI" id="CHEBI:456215"/>
        <dbReference type="EC" id="6.1.1.21"/>
    </reaction>
</comment>
<comment type="subunit">
    <text evidence="1">Homodimer.</text>
</comment>
<comment type="subcellular location">
    <subcellularLocation>
        <location evidence="1">Cytoplasm</location>
    </subcellularLocation>
</comment>
<comment type="similarity">
    <text evidence="1">Belongs to the class-II aminoacyl-tRNA synthetase family.</text>
</comment>
<organism>
    <name type="scientific">Shewanella sp. (strain ANA-3)</name>
    <dbReference type="NCBI Taxonomy" id="94122"/>
    <lineage>
        <taxon>Bacteria</taxon>
        <taxon>Pseudomonadati</taxon>
        <taxon>Pseudomonadota</taxon>
        <taxon>Gammaproteobacteria</taxon>
        <taxon>Alteromonadales</taxon>
        <taxon>Shewanellaceae</taxon>
        <taxon>Shewanella</taxon>
    </lineage>
</organism>
<protein>
    <recommendedName>
        <fullName evidence="1">Histidine--tRNA ligase</fullName>
        <ecNumber evidence="1">6.1.1.21</ecNumber>
    </recommendedName>
    <alternativeName>
        <fullName evidence="1">Histidyl-tRNA synthetase</fullName>
        <shortName evidence="1">HisRS</shortName>
    </alternativeName>
</protein>
<keyword id="KW-0030">Aminoacyl-tRNA synthetase</keyword>
<keyword id="KW-0067">ATP-binding</keyword>
<keyword id="KW-0963">Cytoplasm</keyword>
<keyword id="KW-0436">Ligase</keyword>
<keyword id="KW-0547">Nucleotide-binding</keyword>
<keyword id="KW-0648">Protein biosynthesis</keyword>
<dbReference type="EC" id="6.1.1.21" evidence="1"/>
<dbReference type="EMBL" id="CP000469">
    <property type="protein sequence ID" value="ABK47465.1"/>
    <property type="molecule type" value="Genomic_DNA"/>
</dbReference>
<dbReference type="RefSeq" id="WP_011716313.1">
    <property type="nucleotide sequence ID" value="NC_008577.1"/>
</dbReference>
<dbReference type="SMR" id="A0KUJ6"/>
<dbReference type="STRING" id="94122.Shewana3_1230"/>
<dbReference type="KEGG" id="shn:Shewana3_1230"/>
<dbReference type="eggNOG" id="COG0124">
    <property type="taxonomic scope" value="Bacteria"/>
</dbReference>
<dbReference type="HOGENOM" id="CLU_025113_1_1_6"/>
<dbReference type="OrthoDB" id="9800814at2"/>
<dbReference type="Proteomes" id="UP000002589">
    <property type="component" value="Chromosome"/>
</dbReference>
<dbReference type="GO" id="GO:0005737">
    <property type="term" value="C:cytoplasm"/>
    <property type="evidence" value="ECO:0007669"/>
    <property type="project" value="UniProtKB-SubCell"/>
</dbReference>
<dbReference type="GO" id="GO:0005524">
    <property type="term" value="F:ATP binding"/>
    <property type="evidence" value="ECO:0007669"/>
    <property type="project" value="UniProtKB-UniRule"/>
</dbReference>
<dbReference type="GO" id="GO:0004821">
    <property type="term" value="F:histidine-tRNA ligase activity"/>
    <property type="evidence" value="ECO:0007669"/>
    <property type="project" value="UniProtKB-UniRule"/>
</dbReference>
<dbReference type="GO" id="GO:0006427">
    <property type="term" value="P:histidyl-tRNA aminoacylation"/>
    <property type="evidence" value="ECO:0007669"/>
    <property type="project" value="UniProtKB-UniRule"/>
</dbReference>
<dbReference type="CDD" id="cd00773">
    <property type="entry name" value="HisRS-like_core"/>
    <property type="match status" value="1"/>
</dbReference>
<dbReference type="CDD" id="cd00859">
    <property type="entry name" value="HisRS_anticodon"/>
    <property type="match status" value="1"/>
</dbReference>
<dbReference type="FunFam" id="3.30.930.10:FF:000005">
    <property type="entry name" value="Histidine--tRNA ligase"/>
    <property type="match status" value="1"/>
</dbReference>
<dbReference type="Gene3D" id="3.40.50.800">
    <property type="entry name" value="Anticodon-binding domain"/>
    <property type="match status" value="1"/>
</dbReference>
<dbReference type="Gene3D" id="3.30.930.10">
    <property type="entry name" value="Bira Bifunctional Protein, Domain 2"/>
    <property type="match status" value="1"/>
</dbReference>
<dbReference type="HAMAP" id="MF_00127">
    <property type="entry name" value="His_tRNA_synth"/>
    <property type="match status" value="1"/>
</dbReference>
<dbReference type="InterPro" id="IPR006195">
    <property type="entry name" value="aa-tRNA-synth_II"/>
</dbReference>
<dbReference type="InterPro" id="IPR045864">
    <property type="entry name" value="aa-tRNA-synth_II/BPL/LPL"/>
</dbReference>
<dbReference type="InterPro" id="IPR004154">
    <property type="entry name" value="Anticodon-bd"/>
</dbReference>
<dbReference type="InterPro" id="IPR036621">
    <property type="entry name" value="Anticodon-bd_dom_sf"/>
</dbReference>
<dbReference type="InterPro" id="IPR015807">
    <property type="entry name" value="His-tRNA-ligase"/>
</dbReference>
<dbReference type="InterPro" id="IPR041715">
    <property type="entry name" value="HisRS-like_core"/>
</dbReference>
<dbReference type="InterPro" id="IPR004516">
    <property type="entry name" value="HisRS/HisZ"/>
</dbReference>
<dbReference type="InterPro" id="IPR033656">
    <property type="entry name" value="HisRS_anticodon"/>
</dbReference>
<dbReference type="NCBIfam" id="TIGR00442">
    <property type="entry name" value="hisS"/>
    <property type="match status" value="1"/>
</dbReference>
<dbReference type="PANTHER" id="PTHR43707:SF1">
    <property type="entry name" value="HISTIDINE--TRNA LIGASE, MITOCHONDRIAL-RELATED"/>
    <property type="match status" value="1"/>
</dbReference>
<dbReference type="PANTHER" id="PTHR43707">
    <property type="entry name" value="HISTIDYL-TRNA SYNTHETASE"/>
    <property type="match status" value="1"/>
</dbReference>
<dbReference type="Pfam" id="PF03129">
    <property type="entry name" value="HGTP_anticodon"/>
    <property type="match status" value="1"/>
</dbReference>
<dbReference type="Pfam" id="PF13393">
    <property type="entry name" value="tRNA-synt_His"/>
    <property type="match status" value="1"/>
</dbReference>
<dbReference type="PIRSF" id="PIRSF001549">
    <property type="entry name" value="His-tRNA_synth"/>
    <property type="match status" value="1"/>
</dbReference>
<dbReference type="SUPFAM" id="SSF52954">
    <property type="entry name" value="Class II aaRS ABD-related"/>
    <property type="match status" value="1"/>
</dbReference>
<dbReference type="SUPFAM" id="SSF55681">
    <property type="entry name" value="Class II aaRS and biotin synthetases"/>
    <property type="match status" value="1"/>
</dbReference>
<dbReference type="PROSITE" id="PS50862">
    <property type="entry name" value="AA_TRNA_LIGASE_II"/>
    <property type="match status" value="1"/>
</dbReference>
<sequence length="425" mass="47495">MAKQIQAIRGMNDILPTQSPLWQKVEAVLRASVAAYGYSEIRTPIVENTDLFKRSIGEVTDIVEKEMYTFEDRNGDSLTLRPEGTASTVRAGNEHGLLYNQEQRLWYMGPMFRHERPQKGRYRQFHQFGVEVYGIGSADIDAEVLMLSARLWEKLGISEHVTLELNTLGDPAERAAYREALIAFLEQHKDKLDEDSQRRMYSNPLRVLDSKDPQVQSILADAPALMDYLGEESSQHFAQLRELLDAVGIQYRVNPRLVRGLDYYNRTVFEWVTNSLGSQGTVLAGGRYDGLVAQLGGKDTPAVGFAMGLERIVLLLETLELTQDIPAAVDVYVAAMGDSCLVEAIKVAQELRSTLPTLRVMSHCGGGNFKKQIKRADKSGAQVALLIGEEELAEGVVTVKYLRNDNEQQRVARNALSAFLAELTK</sequence>